<accession>P23185</accession>
<feature type="chain" id="PRO_0000068572" description="Microcin B17-processing protein McbC">
    <location>
        <begin position="1"/>
        <end position="272"/>
    </location>
</feature>
<feature type="helix" evidence="2">
    <location>
        <begin position="8"/>
        <end position="12"/>
    </location>
</feature>
<feature type="helix" evidence="2">
    <location>
        <begin position="17"/>
        <end position="27"/>
    </location>
</feature>
<feature type="helix" evidence="2">
    <location>
        <begin position="28"/>
        <end position="30"/>
    </location>
</feature>
<feature type="helix" evidence="2">
    <location>
        <begin position="36"/>
        <end position="38"/>
    </location>
</feature>
<feature type="turn" evidence="2">
    <location>
        <begin position="39"/>
        <end position="41"/>
    </location>
</feature>
<feature type="helix" evidence="2">
    <location>
        <begin position="49"/>
        <end position="55"/>
    </location>
</feature>
<feature type="helix" evidence="2">
    <location>
        <begin position="74"/>
        <end position="76"/>
    </location>
</feature>
<feature type="strand" evidence="2">
    <location>
        <begin position="88"/>
        <end position="90"/>
    </location>
</feature>
<feature type="helix" evidence="2">
    <location>
        <begin position="97"/>
        <end position="108"/>
    </location>
</feature>
<feature type="helix" evidence="2">
    <location>
        <begin position="123"/>
        <end position="125"/>
    </location>
</feature>
<feature type="strand" evidence="2">
    <location>
        <begin position="129"/>
        <end position="135"/>
    </location>
</feature>
<feature type="strand" evidence="2">
    <location>
        <begin position="149"/>
        <end position="153"/>
    </location>
</feature>
<feature type="turn" evidence="2">
    <location>
        <begin position="154"/>
        <end position="157"/>
    </location>
</feature>
<feature type="strand" evidence="2">
    <location>
        <begin position="158"/>
        <end position="163"/>
    </location>
</feature>
<feature type="helix" evidence="2">
    <location>
        <begin position="167"/>
        <end position="175"/>
    </location>
</feature>
<feature type="helix" evidence="2">
    <location>
        <begin position="176"/>
        <end position="178"/>
    </location>
</feature>
<feature type="helix" evidence="2">
    <location>
        <begin position="179"/>
        <end position="182"/>
    </location>
</feature>
<feature type="strand" evidence="2">
    <location>
        <begin position="186"/>
        <end position="194"/>
    </location>
</feature>
<feature type="helix" evidence="2">
    <location>
        <begin position="195"/>
        <end position="199"/>
    </location>
</feature>
<feature type="turn" evidence="2">
    <location>
        <begin position="200"/>
        <end position="203"/>
    </location>
</feature>
<feature type="helix" evidence="2">
    <location>
        <begin position="204"/>
        <end position="227"/>
    </location>
</feature>
<feature type="strand" evidence="2">
    <location>
        <begin position="231"/>
        <end position="235"/>
    </location>
</feature>
<feature type="helix" evidence="2">
    <location>
        <begin position="240"/>
        <end position="246"/>
    </location>
</feature>
<feature type="turn" evidence="2">
    <location>
        <begin position="251"/>
        <end position="253"/>
    </location>
</feature>
<feature type="strand" evidence="2">
    <location>
        <begin position="254"/>
        <end position="264"/>
    </location>
</feature>
<reference key="1">
    <citation type="journal article" date="1989" name="J. Bacteriol.">
        <title>DNA sequence, products, and transcriptional pattern of the genes involved in production of the DNA replication inhibitor microcin B17.</title>
        <authorList>
            <person name="Genilloud O."/>
            <person name="Moreno F."/>
            <person name="Kolter R."/>
        </authorList>
    </citation>
    <scope>NUCLEOTIDE SEQUENCE [GENOMIC DNA]</scope>
</reference>
<geneLocation type="plasmid">
    <name>IncFII pMccB17</name>
</geneLocation>
<evidence type="ECO:0000305" key="1"/>
<evidence type="ECO:0007829" key="2">
    <source>
        <dbReference type="PDB" id="6GRH"/>
    </source>
</evidence>
<protein>
    <recommendedName>
        <fullName>Microcin B17-processing protein McbC</fullName>
    </recommendedName>
</protein>
<name>MCBC_ECOLX</name>
<gene>
    <name type="primary">mcbC</name>
</gene>
<proteinExistence type="evidence at protein level"/>
<organism>
    <name type="scientific">Escherichia coli</name>
    <dbReference type="NCBI Taxonomy" id="562"/>
    <lineage>
        <taxon>Bacteria</taxon>
        <taxon>Pseudomonadati</taxon>
        <taxon>Pseudomonadota</taxon>
        <taxon>Gammaproteobacteria</taxon>
        <taxon>Enterobacterales</taxon>
        <taxon>Enterobacteriaceae</taxon>
        <taxon>Escherichia</taxon>
    </lineage>
</organism>
<keyword id="KW-0002">3D-structure</keyword>
<keyword id="KW-0045">Antibiotic biosynthesis</keyword>
<keyword id="KW-0963">Cytoplasm</keyword>
<keyword id="KW-0614">Plasmid</keyword>
<sequence length="272" mass="30753">MSKHELSLVEVTHYTDPEVLAIVKDFHVRGNFASLPEFAERTFVSAVPLAHLEKFENKEVLFRPGFSSVINISSSHNFSRERLPSGINFCDKNKLSIRTIEKLLVNAFSSPDPGSVRRPYPSGGALYPIEVFLCRLSENTENWQAGTNVYHYLPLSQALEPVATCNTQSLYRSLSGGDSERLGKPHFALVYCIIFEKALFKYRYRGYRMALMETGSMYQNAVLVADQIGLKNRVWAGYTDSYVAKTMNLDQRTVAPLIVQFFGDVNDDKCLQ</sequence>
<dbReference type="EMBL" id="M24253">
    <property type="protein sequence ID" value="AAA72743.1"/>
    <property type="molecule type" value="Genomic_DNA"/>
</dbReference>
<dbReference type="PIR" id="C32058">
    <property type="entry name" value="C32058"/>
</dbReference>
<dbReference type="RefSeq" id="WP_001528601.1">
    <property type="nucleotide sequence ID" value="NZ_WSWV01000078.1"/>
</dbReference>
<dbReference type="PDB" id="6GOS">
    <property type="method" value="X-ray"/>
    <property type="resolution" value="2.10 A"/>
    <property type="chains" value="C=1-272"/>
</dbReference>
<dbReference type="PDB" id="6GRG">
    <property type="method" value="X-ray"/>
    <property type="resolution" value="2.35 A"/>
    <property type="chains" value="C=1-272"/>
</dbReference>
<dbReference type="PDB" id="6GRH">
    <property type="method" value="X-ray"/>
    <property type="resolution" value="1.85 A"/>
    <property type="chains" value="C=1-272"/>
</dbReference>
<dbReference type="PDB" id="6GRI">
    <property type="method" value="X-ray"/>
    <property type="resolution" value="2.70 A"/>
    <property type="chains" value="C=1-272"/>
</dbReference>
<dbReference type="PDBsum" id="6GOS"/>
<dbReference type="PDBsum" id="6GRG"/>
<dbReference type="PDBsum" id="6GRH"/>
<dbReference type="PDBsum" id="6GRI"/>
<dbReference type="SMR" id="P23185"/>
<dbReference type="BioCyc" id="MetaCyc:MONOMER-21088"/>
<dbReference type="BRENDA" id="1.3.3.16">
    <property type="organism ID" value="2026"/>
</dbReference>
<dbReference type="GO" id="GO:0005737">
    <property type="term" value="C:cytoplasm"/>
    <property type="evidence" value="ECO:0007669"/>
    <property type="project" value="UniProtKB-SubCell"/>
</dbReference>
<dbReference type="GO" id="GO:0016491">
    <property type="term" value="F:oxidoreductase activity"/>
    <property type="evidence" value="ECO:0007669"/>
    <property type="project" value="InterPro"/>
</dbReference>
<dbReference type="GO" id="GO:0017000">
    <property type="term" value="P:antibiotic biosynthetic process"/>
    <property type="evidence" value="ECO:0007669"/>
    <property type="project" value="UniProtKB-KW"/>
</dbReference>
<dbReference type="CDD" id="cd02142">
    <property type="entry name" value="McbC_SagB-like_oxidoreductase"/>
    <property type="match status" value="1"/>
</dbReference>
<dbReference type="Gene3D" id="3.40.109.10">
    <property type="entry name" value="NADH Oxidase"/>
    <property type="match status" value="1"/>
</dbReference>
<dbReference type="InterPro" id="IPR052544">
    <property type="entry name" value="Bacteriocin_Proc_Enz"/>
</dbReference>
<dbReference type="InterPro" id="IPR029479">
    <property type="entry name" value="Nitroreductase"/>
</dbReference>
<dbReference type="InterPro" id="IPR000415">
    <property type="entry name" value="Nitroreductase-like"/>
</dbReference>
<dbReference type="InterPro" id="IPR020051">
    <property type="entry name" value="SagB-type_dehydrogenase"/>
</dbReference>
<dbReference type="NCBIfam" id="TIGR03605">
    <property type="entry name" value="antibiot_sagB"/>
    <property type="match status" value="1"/>
</dbReference>
<dbReference type="PANTHER" id="PTHR43745">
    <property type="entry name" value="NITROREDUCTASE MJ1384-RELATED"/>
    <property type="match status" value="1"/>
</dbReference>
<dbReference type="PANTHER" id="PTHR43745:SF2">
    <property type="entry name" value="NITROREDUCTASE MJ1384-RELATED"/>
    <property type="match status" value="1"/>
</dbReference>
<dbReference type="Pfam" id="PF00881">
    <property type="entry name" value="Nitroreductase"/>
    <property type="match status" value="1"/>
</dbReference>
<dbReference type="SUPFAM" id="SSF55469">
    <property type="entry name" value="FMN-dependent nitroreductase-like"/>
    <property type="match status" value="1"/>
</dbReference>
<comment type="function">
    <text>Necessary to process the inactive microcin B17 (McbA) precursor into the active peptide.</text>
</comment>
<comment type="subcellular location">
    <subcellularLocation>
        <location evidence="1">Cytoplasm</location>
    </subcellularLocation>
</comment>
<comment type="similarity">
    <text evidence="1">To R.leguminosarum TfxB which is involved in the processing of trifolitoxin.</text>
</comment>